<name>IF2C_PORPU</name>
<comment type="function">
    <text evidence="1">One of the essential components for the initiation of protein synthesis. Protects formylmethionyl-tRNA from spontaneous hydrolysis and promotes its binding to the 30S ribosomal subunits. Also involved in the hydrolysis of GTP during the formation of the 70S ribosomal complex (By similarity).</text>
</comment>
<comment type="subcellular location">
    <subcellularLocation>
        <location>Plastid</location>
        <location>Chloroplast</location>
    </subcellularLocation>
</comment>
<comment type="similarity">
    <text evidence="3">Belongs to the TRAFAC class translation factor GTPase superfamily. Classic translation factor GTPase family. IF-2 subfamily.</text>
</comment>
<dbReference type="EMBL" id="U38804">
    <property type="protein sequence ID" value="AAC08143.1"/>
    <property type="molecule type" value="Genomic_DNA"/>
</dbReference>
<dbReference type="PIR" id="S73178">
    <property type="entry name" value="S73178"/>
</dbReference>
<dbReference type="RefSeq" id="NP_053867.1">
    <property type="nucleotide sequence ID" value="NC_000925.1"/>
</dbReference>
<dbReference type="SMR" id="P51257"/>
<dbReference type="GeneID" id="809886"/>
<dbReference type="GO" id="GO:0009507">
    <property type="term" value="C:chloroplast"/>
    <property type="evidence" value="ECO:0007669"/>
    <property type="project" value="UniProtKB-SubCell"/>
</dbReference>
<dbReference type="GO" id="GO:0005829">
    <property type="term" value="C:cytosol"/>
    <property type="evidence" value="ECO:0007669"/>
    <property type="project" value="TreeGrafter"/>
</dbReference>
<dbReference type="GO" id="GO:0005525">
    <property type="term" value="F:GTP binding"/>
    <property type="evidence" value="ECO:0007669"/>
    <property type="project" value="UniProtKB-KW"/>
</dbReference>
<dbReference type="GO" id="GO:0003924">
    <property type="term" value="F:GTPase activity"/>
    <property type="evidence" value="ECO:0007669"/>
    <property type="project" value="UniProtKB-UniRule"/>
</dbReference>
<dbReference type="GO" id="GO:0003743">
    <property type="term" value="F:translation initiation factor activity"/>
    <property type="evidence" value="ECO:0007669"/>
    <property type="project" value="UniProtKB-UniRule"/>
</dbReference>
<dbReference type="CDD" id="cd01887">
    <property type="entry name" value="IF2_eIF5B"/>
    <property type="match status" value="1"/>
</dbReference>
<dbReference type="CDD" id="cd03702">
    <property type="entry name" value="IF2_mtIF2_II"/>
    <property type="match status" value="1"/>
</dbReference>
<dbReference type="CDD" id="cd03692">
    <property type="entry name" value="mtIF2_IVc"/>
    <property type="match status" value="1"/>
</dbReference>
<dbReference type="FunFam" id="2.40.30.10:FF:000008">
    <property type="entry name" value="Translation initiation factor IF-2"/>
    <property type="match status" value="1"/>
</dbReference>
<dbReference type="FunFam" id="3.40.50.10050:FF:000001">
    <property type="entry name" value="Translation initiation factor IF-2"/>
    <property type="match status" value="1"/>
</dbReference>
<dbReference type="FunFam" id="3.40.50.300:FF:000019">
    <property type="entry name" value="Translation initiation factor IF-2"/>
    <property type="match status" value="1"/>
</dbReference>
<dbReference type="Gene3D" id="3.40.50.300">
    <property type="entry name" value="P-loop containing nucleotide triphosphate hydrolases"/>
    <property type="match status" value="1"/>
</dbReference>
<dbReference type="Gene3D" id="2.40.30.10">
    <property type="entry name" value="Translation factors"/>
    <property type="match status" value="2"/>
</dbReference>
<dbReference type="Gene3D" id="3.40.50.10050">
    <property type="entry name" value="Translation initiation factor IF- 2, domain 3"/>
    <property type="match status" value="1"/>
</dbReference>
<dbReference type="HAMAP" id="MF_00100_B">
    <property type="entry name" value="IF_2_B"/>
    <property type="match status" value="1"/>
</dbReference>
<dbReference type="InterPro" id="IPR053905">
    <property type="entry name" value="EF-G-like_DII"/>
</dbReference>
<dbReference type="InterPro" id="IPR044145">
    <property type="entry name" value="IF2_II"/>
</dbReference>
<dbReference type="InterPro" id="IPR006847">
    <property type="entry name" value="IF2_N"/>
</dbReference>
<dbReference type="InterPro" id="IPR027417">
    <property type="entry name" value="P-loop_NTPase"/>
</dbReference>
<dbReference type="InterPro" id="IPR005225">
    <property type="entry name" value="Small_GTP-bd"/>
</dbReference>
<dbReference type="InterPro" id="IPR000795">
    <property type="entry name" value="T_Tr_GTP-bd_dom"/>
</dbReference>
<dbReference type="InterPro" id="IPR000178">
    <property type="entry name" value="TF_IF2_bacterial-like"/>
</dbReference>
<dbReference type="InterPro" id="IPR015760">
    <property type="entry name" value="TIF_IF2"/>
</dbReference>
<dbReference type="InterPro" id="IPR023115">
    <property type="entry name" value="TIF_IF2_dom3"/>
</dbReference>
<dbReference type="InterPro" id="IPR036925">
    <property type="entry name" value="TIF_IF2_dom3_sf"/>
</dbReference>
<dbReference type="InterPro" id="IPR009000">
    <property type="entry name" value="Transl_B-barrel_sf"/>
</dbReference>
<dbReference type="NCBIfam" id="TIGR00487">
    <property type="entry name" value="IF-2"/>
    <property type="match status" value="1"/>
</dbReference>
<dbReference type="NCBIfam" id="TIGR00231">
    <property type="entry name" value="small_GTP"/>
    <property type="match status" value="1"/>
</dbReference>
<dbReference type="PANTHER" id="PTHR43381:SF5">
    <property type="entry name" value="TR-TYPE G DOMAIN-CONTAINING PROTEIN"/>
    <property type="match status" value="1"/>
</dbReference>
<dbReference type="PANTHER" id="PTHR43381">
    <property type="entry name" value="TRANSLATION INITIATION FACTOR IF-2-RELATED"/>
    <property type="match status" value="1"/>
</dbReference>
<dbReference type="Pfam" id="PF22042">
    <property type="entry name" value="EF-G_D2"/>
    <property type="match status" value="1"/>
</dbReference>
<dbReference type="Pfam" id="PF00009">
    <property type="entry name" value="GTP_EFTU"/>
    <property type="match status" value="1"/>
</dbReference>
<dbReference type="Pfam" id="PF11987">
    <property type="entry name" value="IF-2"/>
    <property type="match status" value="1"/>
</dbReference>
<dbReference type="Pfam" id="PF04760">
    <property type="entry name" value="IF2_N"/>
    <property type="match status" value="1"/>
</dbReference>
<dbReference type="SUPFAM" id="SSF52156">
    <property type="entry name" value="Initiation factor IF2/eIF5b, domain 3"/>
    <property type="match status" value="1"/>
</dbReference>
<dbReference type="SUPFAM" id="SSF52540">
    <property type="entry name" value="P-loop containing nucleoside triphosphate hydrolases"/>
    <property type="match status" value="1"/>
</dbReference>
<dbReference type="SUPFAM" id="SSF50447">
    <property type="entry name" value="Translation proteins"/>
    <property type="match status" value="2"/>
</dbReference>
<dbReference type="PROSITE" id="PS51722">
    <property type="entry name" value="G_TR_2"/>
    <property type="match status" value="1"/>
</dbReference>
<proteinExistence type="inferred from homology"/>
<evidence type="ECO:0000250" key="1"/>
<evidence type="ECO:0000256" key="2">
    <source>
        <dbReference type="SAM" id="MobiDB-lite"/>
    </source>
</evidence>
<evidence type="ECO:0000305" key="3"/>
<organism>
    <name type="scientific">Porphyra purpurea</name>
    <name type="common">Red seaweed</name>
    <name type="synonym">Ulva purpurea</name>
    <dbReference type="NCBI Taxonomy" id="2787"/>
    <lineage>
        <taxon>Eukaryota</taxon>
        <taxon>Rhodophyta</taxon>
        <taxon>Bangiophyceae</taxon>
        <taxon>Bangiales</taxon>
        <taxon>Bangiaceae</taxon>
        <taxon>Porphyra</taxon>
    </lineage>
</organism>
<reference key="1">
    <citation type="journal article" date="1995" name="Plant Mol. Biol. Rep.">
        <title>Complete nucleotide sequence of the Porphyra purpurea chloroplast genome.</title>
        <authorList>
            <person name="Reith M.E."/>
            <person name="Munholland J."/>
        </authorList>
    </citation>
    <scope>NUCLEOTIDE SEQUENCE [LARGE SCALE GENOMIC DNA]</scope>
    <source>
        <strain>Avonport</strain>
    </source>
</reference>
<feature type="chain" id="PRO_0000137292" description="Translation initiation factor IF-2, chloroplastic">
    <location>
        <begin position="1"/>
        <end position="763"/>
    </location>
</feature>
<feature type="domain" description="tr-type G">
    <location>
        <begin position="261"/>
        <end position="429"/>
    </location>
</feature>
<feature type="region of interest" description="Disordered" evidence="2">
    <location>
        <begin position="1"/>
        <end position="22"/>
    </location>
</feature>
<feature type="region of interest" description="Disordered" evidence="2">
    <location>
        <begin position="52"/>
        <end position="122"/>
    </location>
</feature>
<feature type="region of interest" description="Disordered" evidence="2">
    <location>
        <begin position="149"/>
        <end position="168"/>
    </location>
</feature>
<feature type="compositionally biased region" description="Low complexity" evidence="2">
    <location>
        <begin position="13"/>
        <end position="22"/>
    </location>
</feature>
<feature type="compositionally biased region" description="Basic and acidic residues" evidence="2">
    <location>
        <begin position="73"/>
        <end position="92"/>
    </location>
</feature>
<feature type="compositionally biased region" description="Basic residues" evidence="2">
    <location>
        <begin position="93"/>
        <end position="104"/>
    </location>
</feature>
<feature type="compositionally biased region" description="Polar residues" evidence="2">
    <location>
        <begin position="151"/>
        <end position="168"/>
    </location>
</feature>
<feature type="binding site" evidence="1">
    <location>
        <begin position="270"/>
        <end position="277"/>
    </location>
    <ligand>
        <name>GTP</name>
        <dbReference type="ChEBI" id="CHEBI:37565"/>
    </ligand>
</feature>
<feature type="binding site" evidence="1">
    <location>
        <begin position="316"/>
        <end position="320"/>
    </location>
    <ligand>
        <name>GTP</name>
        <dbReference type="ChEBI" id="CHEBI:37565"/>
    </ligand>
</feature>
<feature type="binding site" evidence="1">
    <location>
        <begin position="370"/>
        <end position="373"/>
    </location>
    <ligand>
        <name>GTP</name>
        <dbReference type="ChEBI" id="CHEBI:37565"/>
    </ligand>
</feature>
<keyword id="KW-0150">Chloroplast</keyword>
<keyword id="KW-0342">GTP-binding</keyword>
<keyword id="KW-0396">Initiation factor</keyword>
<keyword id="KW-0547">Nucleotide-binding</keyword>
<keyword id="KW-0934">Plastid</keyword>
<keyword id="KW-0648">Protein biosynthesis</keyword>
<sequence length="763" mass="84305">MFLNNQNFEKKTSSYSTNNNSSEKIVDLKNPQFIYKIRLESTSTDNLLHLDIDKSETDGPNTEQHLELSSPPRIDKKNKNFNKAHDLLDNKKNKNRQRKKIKNKIHIDDDDDNFSDSTSNSAQTAGDLAISLMRPPKPRSQSIKKVIGNNKIPQQKKQQVASSIDQSITLPNSPPESISLINPLTIQELSRLICIPETDIIKYLFLKGISVTINQTVDNTIISSVAKNFGIAVDSQEQNNKKKKLTNLDIPVIVDNHHCVNRPPVVTILGHVDHGKTSLLDYIHKSNNANKEVGGITQNIVAYEVEFKHQQIVFLDTPGHEAFTSMRSRGANLTDIAIIIIAADDGIKPQTIEAIQHLQKANVPFIVAISKIDKNLDSVDKIQHDLVAQNVISEKLGGSVPIIPISSVTGENIDKLLETILLLAELENLQADPTQLAQGVIIEAHLDKFHGPAATLLIQNGTLHIGDNMVIGMTHAKIRAIINNAKQKINLAAPSSVVEIWGLSSVPATGEVALVVNSDKEAKLKAIENESTNSIIVQKQKSLNSRITLDTISTINAKDENKQVTLIIKTDNQGSTEAILDSLSQFPQSKVQLNVLSIFPGEITATDVELASTTNSSLIGFNTNFAPGSRQAAAKLNVIIENYQIIYALIEGVREKMETLLDPEYSEVPVGEAEVGTVFSLANRKIAGCRVTNNKLLKNSWIKVLRENEIVYQGKIESLKRIREDVEEIQAGNECGIFISEFQLWQTGDKIQSFDLVPKKRSL</sequence>
<accession>P51257</accession>
<gene>
    <name type="primary">infB</name>
</gene>
<geneLocation type="chloroplast"/>
<protein>
    <recommendedName>
        <fullName>Translation initiation factor IF-2, chloroplastic</fullName>
    </recommendedName>
</protein>